<keyword id="KW-1185">Reference proteome</keyword>
<keyword id="KW-0687">Ribonucleoprotein</keyword>
<keyword id="KW-0689">Ribosomal protein</keyword>
<keyword id="KW-0694">RNA-binding</keyword>
<keyword id="KW-0699">rRNA-binding</keyword>
<comment type="function">
    <text evidence="1">This protein binds to the 23S rRNA, and is important in its secondary structure. It is located near the subunit interface in the base of the L7/L12 stalk, and near the tRNA binding site of the peptidyltransferase center.</text>
</comment>
<comment type="subunit">
    <text evidence="1">Part of the 50S ribosomal subunit.</text>
</comment>
<comment type="similarity">
    <text evidence="1">Belongs to the universal ribosomal protein uL6 family.</text>
</comment>
<reference key="1">
    <citation type="submission" date="2007-08" db="EMBL/GenBank/DDBJ databases">
        <title>Complete sequence of Roseiflexus castenholzii DSM 13941.</title>
        <authorList>
            <consortium name="US DOE Joint Genome Institute"/>
            <person name="Copeland A."/>
            <person name="Lucas S."/>
            <person name="Lapidus A."/>
            <person name="Barry K."/>
            <person name="Glavina del Rio T."/>
            <person name="Dalin E."/>
            <person name="Tice H."/>
            <person name="Pitluck S."/>
            <person name="Thompson L.S."/>
            <person name="Brettin T."/>
            <person name="Bruce D."/>
            <person name="Detter J.C."/>
            <person name="Han C."/>
            <person name="Tapia R."/>
            <person name="Schmutz J."/>
            <person name="Larimer F."/>
            <person name="Land M."/>
            <person name="Hauser L."/>
            <person name="Kyrpides N."/>
            <person name="Mikhailova N."/>
            <person name="Bryant D.A."/>
            <person name="Hanada S."/>
            <person name="Tsukatani Y."/>
            <person name="Richardson P."/>
        </authorList>
    </citation>
    <scope>NUCLEOTIDE SEQUENCE [LARGE SCALE GENOMIC DNA]</scope>
    <source>
        <strain>DSM 13941 / HLO8</strain>
    </source>
</reference>
<accession>A7NR48</accession>
<evidence type="ECO:0000255" key="1">
    <source>
        <dbReference type="HAMAP-Rule" id="MF_01365"/>
    </source>
</evidence>
<evidence type="ECO:0000305" key="2"/>
<name>RL6_ROSCS</name>
<dbReference type="EMBL" id="CP000804">
    <property type="protein sequence ID" value="ABU60044.1"/>
    <property type="molecule type" value="Genomic_DNA"/>
</dbReference>
<dbReference type="RefSeq" id="WP_012122466.1">
    <property type="nucleotide sequence ID" value="NC_009767.1"/>
</dbReference>
<dbReference type="SMR" id="A7NR48"/>
<dbReference type="STRING" id="383372.Rcas_4011"/>
<dbReference type="KEGG" id="rca:Rcas_4011"/>
<dbReference type="eggNOG" id="COG0097">
    <property type="taxonomic scope" value="Bacteria"/>
</dbReference>
<dbReference type="HOGENOM" id="CLU_065464_1_2_0"/>
<dbReference type="OrthoDB" id="9805007at2"/>
<dbReference type="Proteomes" id="UP000000263">
    <property type="component" value="Chromosome"/>
</dbReference>
<dbReference type="GO" id="GO:0022625">
    <property type="term" value="C:cytosolic large ribosomal subunit"/>
    <property type="evidence" value="ECO:0007669"/>
    <property type="project" value="TreeGrafter"/>
</dbReference>
<dbReference type="GO" id="GO:0019843">
    <property type="term" value="F:rRNA binding"/>
    <property type="evidence" value="ECO:0007669"/>
    <property type="project" value="UniProtKB-UniRule"/>
</dbReference>
<dbReference type="GO" id="GO:0003735">
    <property type="term" value="F:structural constituent of ribosome"/>
    <property type="evidence" value="ECO:0007669"/>
    <property type="project" value="InterPro"/>
</dbReference>
<dbReference type="GO" id="GO:0002181">
    <property type="term" value="P:cytoplasmic translation"/>
    <property type="evidence" value="ECO:0007669"/>
    <property type="project" value="TreeGrafter"/>
</dbReference>
<dbReference type="FunFam" id="3.90.930.12:FF:000002">
    <property type="entry name" value="50S ribosomal protein L6"/>
    <property type="match status" value="1"/>
</dbReference>
<dbReference type="Gene3D" id="3.90.930.12">
    <property type="entry name" value="Ribosomal protein L6, alpha-beta domain"/>
    <property type="match status" value="2"/>
</dbReference>
<dbReference type="HAMAP" id="MF_01365_B">
    <property type="entry name" value="Ribosomal_uL6_B"/>
    <property type="match status" value="1"/>
</dbReference>
<dbReference type="InterPro" id="IPR000702">
    <property type="entry name" value="Ribosomal_uL6-like"/>
</dbReference>
<dbReference type="InterPro" id="IPR036789">
    <property type="entry name" value="Ribosomal_uL6-like_a/b-dom_sf"/>
</dbReference>
<dbReference type="InterPro" id="IPR020040">
    <property type="entry name" value="Ribosomal_uL6_a/b-dom"/>
</dbReference>
<dbReference type="InterPro" id="IPR019906">
    <property type="entry name" value="Ribosomal_uL6_bac-type"/>
</dbReference>
<dbReference type="NCBIfam" id="TIGR03654">
    <property type="entry name" value="L6_bact"/>
    <property type="match status" value="1"/>
</dbReference>
<dbReference type="PANTHER" id="PTHR11655">
    <property type="entry name" value="60S/50S RIBOSOMAL PROTEIN L6/L9"/>
    <property type="match status" value="1"/>
</dbReference>
<dbReference type="PANTHER" id="PTHR11655:SF14">
    <property type="entry name" value="LARGE RIBOSOMAL SUBUNIT PROTEIN UL6M"/>
    <property type="match status" value="1"/>
</dbReference>
<dbReference type="Pfam" id="PF00347">
    <property type="entry name" value="Ribosomal_L6"/>
    <property type="match status" value="2"/>
</dbReference>
<dbReference type="PIRSF" id="PIRSF002162">
    <property type="entry name" value="Ribosomal_L6"/>
    <property type="match status" value="1"/>
</dbReference>
<dbReference type="PRINTS" id="PR00059">
    <property type="entry name" value="RIBOSOMALL6"/>
</dbReference>
<dbReference type="SUPFAM" id="SSF56053">
    <property type="entry name" value="Ribosomal protein L6"/>
    <property type="match status" value="2"/>
</dbReference>
<gene>
    <name evidence="1" type="primary">rplF</name>
    <name type="ordered locus">Rcas_4011</name>
</gene>
<proteinExistence type="inferred from homology"/>
<protein>
    <recommendedName>
        <fullName evidence="1">Large ribosomal subunit protein uL6</fullName>
    </recommendedName>
    <alternativeName>
        <fullName evidence="2">50S ribosomal protein L6</fullName>
    </alternativeName>
</protein>
<organism>
    <name type="scientific">Roseiflexus castenholzii (strain DSM 13941 / HLO8)</name>
    <dbReference type="NCBI Taxonomy" id="383372"/>
    <lineage>
        <taxon>Bacteria</taxon>
        <taxon>Bacillati</taxon>
        <taxon>Chloroflexota</taxon>
        <taxon>Chloroflexia</taxon>
        <taxon>Chloroflexales</taxon>
        <taxon>Roseiflexineae</taxon>
        <taxon>Roseiflexaceae</taxon>
        <taxon>Roseiflexus</taxon>
    </lineage>
</organism>
<feature type="chain" id="PRO_1000087059" description="Large ribosomal subunit protein uL6">
    <location>
        <begin position="1"/>
        <end position="187"/>
    </location>
</feature>
<sequence>MSRIGKKPIPVPRGVEVTIAEGNVVTVKGPKGTLIQRLPPEMIITHENGVITVARLSDQKQHRALHGLTRSLIANMVTGVTEGYQRVLEITGIGYRAVREGKNLILQVGFSHPIRVTPPEGITFEVMERRSANEPQQVIIRGIDKQKVGEEAAKLRALRPPEPYKGYGIKYREERVRRKAGKAGKAR</sequence>